<accession>P0CP61</accession>
<accession>Q55QS4</accession>
<accession>Q5KFE0</accession>
<name>ATM_CRYNB</name>
<feature type="chain" id="PRO_0000410188" description="Serine/threonine-protein kinase TEL1">
    <location>
        <begin position="1"/>
        <end position="2968"/>
    </location>
</feature>
<feature type="domain" description="FAT" evidence="3">
    <location>
        <begin position="1936"/>
        <end position="2524"/>
    </location>
</feature>
<feature type="domain" description="PI3K/PI4K catalytic" evidence="2">
    <location>
        <begin position="2626"/>
        <end position="2938"/>
    </location>
</feature>
<feature type="domain" description="FATC" evidence="3 4">
    <location>
        <begin position="2932"/>
        <end position="2968"/>
    </location>
</feature>
<feature type="region of interest" description="Disordered" evidence="5">
    <location>
        <begin position="364"/>
        <end position="386"/>
    </location>
</feature>
<feature type="region of interest" description="Disordered" evidence="5">
    <location>
        <begin position="812"/>
        <end position="854"/>
    </location>
</feature>
<feature type="region of interest" description="Disordered" evidence="5">
    <location>
        <begin position="902"/>
        <end position="935"/>
    </location>
</feature>
<feature type="region of interest" description="Disordered" evidence="5">
    <location>
        <begin position="2386"/>
        <end position="2408"/>
    </location>
</feature>
<feature type="region of interest" description="G-loop" evidence="2">
    <location>
        <begin position="2632"/>
        <end position="2638"/>
    </location>
</feature>
<feature type="region of interest" description="Catalytic loop" evidence="2">
    <location>
        <begin position="2805"/>
        <end position="2813"/>
    </location>
</feature>
<feature type="region of interest" description="Activation loop" evidence="2">
    <location>
        <begin position="2825"/>
        <end position="2849"/>
    </location>
</feature>
<feature type="compositionally biased region" description="Polar residues" evidence="5">
    <location>
        <begin position="369"/>
        <end position="381"/>
    </location>
</feature>
<feature type="compositionally biased region" description="Acidic residues" evidence="5">
    <location>
        <begin position="916"/>
        <end position="928"/>
    </location>
</feature>
<feature type="compositionally biased region" description="Basic and acidic residues" evidence="5">
    <location>
        <begin position="2390"/>
        <end position="2408"/>
    </location>
</feature>
<reference key="1">
    <citation type="journal article" date="2005" name="Science">
        <title>The genome of the basidiomycetous yeast and human pathogen Cryptococcus neoformans.</title>
        <authorList>
            <person name="Loftus B.J."/>
            <person name="Fung E."/>
            <person name="Roncaglia P."/>
            <person name="Rowley D."/>
            <person name="Amedeo P."/>
            <person name="Bruno D."/>
            <person name="Vamathevan J."/>
            <person name="Miranda M."/>
            <person name="Anderson I.J."/>
            <person name="Fraser J.A."/>
            <person name="Allen J.E."/>
            <person name="Bosdet I.E."/>
            <person name="Brent M.R."/>
            <person name="Chiu R."/>
            <person name="Doering T.L."/>
            <person name="Donlin M.J."/>
            <person name="D'Souza C.A."/>
            <person name="Fox D.S."/>
            <person name="Grinberg V."/>
            <person name="Fu J."/>
            <person name="Fukushima M."/>
            <person name="Haas B.J."/>
            <person name="Huang J.C."/>
            <person name="Janbon G."/>
            <person name="Jones S.J.M."/>
            <person name="Koo H.L."/>
            <person name="Krzywinski M.I."/>
            <person name="Kwon-Chung K.J."/>
            <person name="Lengeler K.B."/>
            <person name="Maiti R."/>
            <person name="Marra M.A."/>
            <person name="Marra R.E."/>
            <person name="Mathewson C.A."/>
            <person name="Mitchell T.G."/>
            <person name="Pertea M."/>
            <person name="Riggs F.R."/>
            <person name="Salzberg S.L."/>
            <person name="Schein J.E."/>
            <person name="Shvartsbeyn A."/>
            <person name="Shin H."/>
            <person name="Shumway M."/>
            <person name="Specht C.A."/>
            <person name="Suh B.B."/>
            <person name="Tenney A."/>
            <person name="Utterback T.R."/>
            <person name="Wickes B.L."/>
            <person name="Wortman J.R."/>
            <person name="Wye N.H."/>
            <person name="Kronstad J.W."/>
            <person name="Lodge J.K."/>
            <person name="Heitman J."/>
            <person name="Davis R.W."/>
            <person name="Fraser C.M."/>
            <person name="Hyman R.W."/>
        </authorList>
    </citation>
    <scope>NUCLEOTIDE SEQUENCE [LARGE SCALE GENOMIC DNA]</scope>
    <source>
        <strain>B-3501A</strain>
    </source>
</reference>
<keyword id="KW-0067">ATP-binding</keyword>
<keyword id="KW-0156">Chromatin regulator</keyword>
<keyword id="KW-0158">Chromosome</keyword>
<keyword id="KW-0227">DNA damage</keyword>
<keyword id="KW-0418">Kinase</keyword>
<keyword id="KW-0547">Nucleotide-binding</keyword>
<keyword id="KW-0539">Nucleus</keyword>
<keyword id="KW-0723">Serine/threonine-protein kinase</keyword>
<keyword id="KW-0779">Telomere</keyword>
<keyword id="KW-0808">Transferase</keyword>
<organism>
    <name type="scientific">Cryptococcus neoformans var. neoformans serotype D (strain B-3501A)</name>
    <name type="common">Filobasidiella neoformans</name>
    <dbReference type="NCBI Taxonomy" id="283643"/>
    <lineage>
        <taxon>Eukaryota</taxon>
        <taxon>Fungi</taxon>
        <taxon>Dikarya</taxon>
        <taxon>Basidiomycota</taxon>
        <taxon>Agaricomycotina</taxon>
        <taxon>Tremellomycetes</taxon>
        <taxon>Tremellales</taxon>
        <taxon>Cryptococcaceae</taxon>
        <taxon>Cryptococcus</taxon>
        <taxon>Cryptococcus neoformans species complex</taxon>
    </lineage>
</organism>
<dbReference type="EC" id="2.7.11.1"/>
<dbReference type="EMBL" id="AAEY01000031">
    <property type="protein sequence ID" value="EAL20188.1"/>
    <property type="molecule type" value="Genomic_DNA"/>
</dbReference>
<dbReference type="RefSeq" id="XP_774835.1">
    <property type="nucleotide sequence ID" value="XM_769742.1"/>
</dbReference>
<dbReference type="SMR" id="P0CP61"/>
<dbReference type="GeneID" id="4936816"/>
<dbReference type="KEGG" id="cnb:CNBF2640"/>
<dbReference type="VEuPathDB" id="FungiDB:CNBF2640"/>
<dbReference type="HOGENOM" id="CLU_000178_11_0_1"/>
<dbReference type="OrthoDB" id="4532at5206"/>
<dbReference type="GO" id="GO:0000781">
    <property type="term" value="C:chromosome, telomeric region"/>
    <property type="evidence" value="ECO:0007669"/>
    <property type="project" value="UniProtKB-SubCell"/>
</dbReference>
<dbReference type="GO" id="GO:0005634">
    <property type="term" value="C:nucleus"/>
    <property type="evidence" value="ECO:0007669"/>
    <property type="project" value="UniProtKB-SubCell"/>
</dbReference>
<dbReference type="GO" id="GO:0005524">
    <property type="term" value="F:ATP binding"/>
    <property type="evidence" value="ECO:0007669"/>
    <property type="project" value="UniProtKB-KW"/>
</dbReference>
<dbReference type="GO" id="GO:0106310">
    <property type="term" value="F:protein serine kinase activity"/>
    <property type="evidence" value="ECO:0007669"/>
    <property type="project" value="RHEA"/>
</dbReference>
<dbReference type="GO" id="GO:0004674">
    <property type="term" value="F:protein serine/threonine kinase activity"/>
    <property type="evidence" value="ECO:0007669"/>
    <property type="project" value="UniProtKB-KW"/>
</dbReference>
<dbReference type="GO" id="GO:0031267">
    <property type="term" value="F:small GTPase binding"/>
    <property type="evidence" value="ECO:0007669"/>
    <property type="project" value="InterPro"/>
</dbReference>
<dbReference type="GO" id="GO:0006325">
    <property type="term" value="P:chromatin organization"/>
    <property type="evidence" value="ECO:0007669"/>
    <property type="project" value="UniProtKB-KW"/>
</dbReference>
<dbReference type="GO" id="GO:0006281">
    <property type="term" value="P:DNA repair"/>
    <property type="evidence" value="ECO:0007669"/>
    <property type="project" value="InterPro"/>
</dbReference>
<dbReference type="GO" id="GO:0006886">
    <property type="term" value="P:intracellular protein transport"/>
    <property type="evidence" value="ECO:0007669"/>
    <property type="project" value="InterPro"/>
</dbReference>
<dbReference type="GO" id="GO:0035556">
    <property type="term" value="P:intracellular signal transduction"/>
    <property type="evidence" value="ECO:0007669"/>
    <property type="project" value="UniProtKB-ARBA"/>
</dbReference>
<dbReference type="CDD" id="cd05171">
    <property type="entry name" value="PIKKc_ATM"/>
    <property type="match status" value="1"/>
</dbReference>
<dbReference type="Gene3D" id="1.10.1070.11">
    <property type="entry name" value="Phosphatidylinositol 3-/4-kinase, catalytic domain"/>
    <property type="match status" value="1"/>
</dbReference>
<dbReference type="Gene3D" id="3.30.1010.10">
    <property type="entry name" value="Phosphatidylinositol 3-kinase Catalytic Subunit, Chain A, domain 4"/>
    <property type="match status" value="1"/>
</dbReference>
<dbReference type="InterPro" id="IPR016024">
    <property type="entry name" value="ARM-type_fold"/>
</dbReference>
<dbReference type="InterPro" id="IPR038980">
    <property type="entry name" value="ATM_plant"/>
</dbReference>
<dbReference type="InterPro" id="IPR003152">
    <property type="entry name" value="FATC_dom"/>
</dbReference>
<dbReference type="InterPro" id="IPR001494">
    <property type="entry name" value="Importin-beta_N"/>
</dbReference>
<dbReference type="InterPro" id="IPR011009">
    <property type="entry name" value="Kinase-like_dom_sf"/>
</dbReference>
<dbReference type="InterPro" id="IPR000403">
    <property type="entry name" value="PI3/4_kinase_cat_dom"/>
</dbReference>
<dbReference type="InterPro" id="IPR036940">
    <property type="entry name" value="PI3/4_kinase_cat_sf"/>
</dbReference>
<dbReference type="InterPro" id="IPR018936">
    <property type="entry name" value="PI3/4_kinase_CS"/>
</dbReference>
<dbReference type="InterPro" id="IPR003151">
    <property type="entry name" value="PIK-rel_kinase_FAT"/>
</dbReference>
<dbReference type="InterPro" id="IPR014009">
    <property type="entry name" value="PIK_FAT"/>
</dbReference>
<dbReference type="InterPro" id="IPR044107">
    <property type="entry name" value="PIKKc_ATM"/>
</dbReference>
<dbReference type="InterPro" id="IPR021668">
    <property type="entry name" value="TAN"/>
</dbReference>
<dbReference type="PANTHER" id="PTHR37079">
    <property type="entry name" value="SERINE/THREONINE-PROTEIN KINASE ATM"/>
    <property type="match status" value="1"/>
</dbReference>
<dbReference type="PANTHER" id="PTHR37079:SF4">
    <property type="entry name" value="SERINE_THREONINE-PROTEIN KINASE ATM"/>
    <property type="match status" value="1"/>
</dbReference>
<dbReference type="Pfam" id="PF02259">
    <property type="entry name" value="FAT"/>
    <property type="match status" value="1"/>
</dbReference>
<dbReference type="Pfam" id="PF02260">
    <property type="entry name" value="FATC"/>
    <property type="match status" value="1"/>
</dbReference>
<dbReference type="Pfam" id="PF00454">
    <property type="entry name" value="PI3_PI4_kinase"/>
    <property type="match status" value="1"/>
</dbReference>
<dbReference type="Pfam" id="PF11640">
    <property type="entry name" value="TAN"/>
    <property type="match status" value="1"/>
</dbReference>
<dbReference type="SMART" id="SM01343">
    <property type="entry name" value="FATC"/>
    <property type="match status" value="1"/>
</dbReference>
<dbReference type="SMART" id="SM00146">
    <property type="entry name" value="PI3Kc"/>
    <property type="match status" value="1"/>
</dbReference>
<dbReference type="SMART" id="SM01342">
    <property type="entry name" value="TAN"/>
    <property type="match status" value="1"/>
</dbReference>
<dbReference type="SUPFAM" id="SSF48371">
    <property type="entry name" value="ARM repeat"/>
    <property type="match status" value="1"/>
</dbReference>
<dbReference type="SUPFAM" id="SSF56112">
    <property type="entry name" value="Protein kinase-like (PK-like)"/>
    <property type="match status" value="1"/>
</dbReference>
<dbReference type="PROSITE" id="PS51189">
    <property type="entry name" value="FAT"/>
    <property type="match status" value="1"/>
</dbReference>
<dbReference type="PROSITE" id="PS51190">
    <property type="entry name" value="FATC"/>
    <property type="match status" value="1"/>
</dbReference>
<dbReference type="PROSITE" id="PS00916">
    <property type="entry name" value="PI3_4_KINASE_2"/>
    <property type="match status" value="1"/>
</dbReference>
<dbReference type="PROSITE" id="PS50290">
    <property type="entry name" value="PI3_4_KINASE_3"/>
    <property type="match status" value="1"/>
</dbReference>
<protein>
    <recommendedName>
        <fullName>Serine/threonine-protein kinase TEL1</fullName>
        <ecNumber>2.7.11.1</ecNumber>
    </recommendedName>
    <alternativeName>
        <fullName>ATM homolog</fullName>
    </alternativeName>
    <alternativeName>
        <fullName>DNA-damage checkpoint kinase TEL1</fullName>
    </alternativeName>
    <alternativeName>
        <fullName>Telomere length regulation protein 1</fullName>
    </alternativeName>
</protein>
<proteinExistence type="inferred from homology"/>
<evidence type="ECO:0000250" key="1"/>
<evidence type="ECO:0000255" key="2">
    <source>
        <dbReference type="PROSITE-ProRule" id="PRU00269"/>
    </source>
</evidence>
<evidence type="ECO:0000255" key="3">
    <source>
        <dbReference type="PROSITE-ProRule" id="PRU00534"/>
    </source>
</evidence>
<evidence type="ECO:0000255" key="4">
    <source>
        <dbReference type="PROSITE-ProRule" id="PRU00535"/>
    </source>
</evidence>
<evidence type="ECO:0000256" key="5">
    <source>
        <dbReference type="SAM" id="MobiDB-lite"/>
    </source>
</evidence>
<evidence type="ECO:0000305" key="6"/>
<comment type="function">
    <text evidence="1">Serine/threonine protein kinase which activates checkpoint signaling upon genotoxic stresses such as ionizing radiation (IR), ultraviolet light (UV), or DNA replication stalling, thereby acting as a DNA damage sensor. Recognizes the substrate consensus sequence [ST]-Q. Phosphorylates histone H2A to form H2AS128ph (gamma-H2A) at sites of DNA damage, involved in the regulation of DNA damage response mechanism. Required for the control of telomere length and genome stability (By similarity).</text>
</comment>
<comment type="catalytic activity">
    <reaction>
        <text>L-seryl-[protein] + ATP = O-phospho-L-seryl-[protein] + ADP + H(+)</text>
        <dbReference type="Rhea" id="RHEA:17989"/>
        <dbReference type="Rhea" id="RHEA-COMP:9863"/>
        <dbReference type="Rhea" id="RHEA-COMP:11604"/>
        <dbReference type="ChEBI" id="CHEBI:15378"/>
        <dbReference type="ChEBI" id="CHEBI:29999"/>
        <dbReference type="ChEBI" id="CHEBI:30616"/>
        <dbReference type="ChEBI" id="CHEBI:83421"/>
        <dbReference type="ChEBI" id="CHEBI:456216"/>
        <dbReference type="EC" id="2.7.11.1"/>
    </reaction>
</comment>
<comment type="catalytic activity">
    <reaction>
        <text>L-threonyl-[protein] + ATP = O-phospho-L-threonyl-[protein] + ADP + H(+)</text>
        <dbReference type="Rhea" id="RHEA:46608"/>
        <dbReference type="Rhea" id="RHEA-COMP:11060"/>
        <dbReference type="Rhea" id="RHEA-COMP:11605"/>
        <dbReference type="ChEBI" id="CHEBI:15378"/>
        <dbReference type="ChEBI" id="CHEBI:30013"/>
        <dbReference type="ChEBI" id="CHEBI:30616"/>
        <dbReference type="ChEBI" id="CHEBI:61977"/>
        <dbReference type="ChEBI" id="CHEBI:456216"/>
        <dbReference type="EC" id="2.7.11.1"/>
    </reaction>
</comment>
<comment type="subunit">
    <text evidence="1">Associates with DNA double-strand breaks.</text>
</comment>
<comment type="subcellular location">
    <subcellularLocation>
        <location evidence="1">Nucleus</location>
    </subcellularLocation>
    <subcellularLocation>
        <location evidence="1">Chromosome</location>
        <location evidence="1">Telomere</location>
    </subcellularLocation>
    <text evidence="1">Localizes to nuclear DNA repair foci with other DNA repair proteins in response to DNA double strand breaks.</text>
</comment>
<comment type="similarity">
    <text evidence="6">Belongs to the PI3/PI4-kinase family. ATM subfamily.</text>
</comment>
<sequence length="2968" mass="331155">MDSVSGLHAALSLCASDSAKDRARAHALLPPIFANAQNLRVFQAAAATHGGAPWLALFHCLFRAVALEKRAVLRGSSNAQAAARLAHAIRIVRLVAEQAVHLIARKPLIALVAHMRHQLVLPPRIFAPALLDYSKALSTLLVYPPHVESLDRHTWLALMSMCFAAILGDDHVSDDQMDDADMLGVAAELERLDAENVPPHRPPVTLNTSSLVQIIPALLCSTVSPIVPPTMKSGDTLTAGQKVGLGIVLKIRRFFTMYPHVTIYHLHLLTALNTVLSDMELNCRDLFLLGSVKIFPHLVTLWAAPERDRDRRIPEQIAIAIHRILPHLAHSAELQRAQDVTENVERLMEMLAKESTMSRGIEPLDLGTFPSTATPSRQSTPSKRRKLENPLASLISAVGMGRPESRLIALQTLVFVIDRHWSKLAKDIQSDIRRTLVSLLTDDNETLQSWAYIALSTIILSSYTAGANENNDDDQSHNGQSQDDWKQVWSFALRKCHLPGSSRSASHAAAVLLQFDKVDSPSTIRGIQTMLTTIAVQGPPTAHDSVCALYSIALEAARSDIQLYSLNLEEQVLSWLEKTFAREKFERDKMDQRLDQATPGDILRLFSAVSRIQYHVPLAEPVTKEFLPDSAVVSYALERAKTQPIRDFLLYHTCPTPPPPPPPLDDSHTTPLLAASENHSTFLGGRPRRLSELLLSILNATTAQWETKPVISSGERPRRCVDLVALGLAFQGLLQLDGYIPHAACINAAIRLLHLLKPSLTSSDLSIPSLDLVWRGLRCLADVPLVKEEEEEEEEEDWPILVKPDVQSGIRQDLLPPTMYDTPPQEEEAESSDPPKRFTQYPPTFPSTLLPTPTAITPSSLSTFQSQSNSASLVHAIWRLPDVSAALQGLFSVCLQVITRSSSSTSSGQPTQLSHDDDDDGEDDDDDFAVASGETTSAPLPEKAAELRASTSLLRSAVAFRLQGVMLVSAGAAGGAQSKAYKDTQLVNSFLQADGLRAVEIGWAICEAMQKGWLRLGIDAVDLVVASLGNMLNSYGYARDERLLQLCLEFLKCSAPVWMGNDHSNDDDLKDEAMRLVCYIATKITAGSITSWRVRLAMLRFIEAFLHYDSASKLWADCMVQEEAEEEEQDVSMEDENHLFHYIAQSLSDPDMRVRARAATTAASALYRPSIHPSEHPIIYDQVSNSQAGDPTFAEHYLSYVLWKLNCCIASAKQRQTVIFDLYEAAIGGTEYSDHLQAGLNAVARRLGLPSITALYLPYAPTTTISHDTSRSSAIAFVLNTTHRLFGLSNRSAFFTACLEHAGAYMLYCGKIGLFTSACDAAGVLPEDLALQLSVAAAAMAMVLPLSNDKATNVSMNKCKAEALALLSSFPGISGPDAAEKFLHSYANGVAAHLWELMDLESSVDEIVAWFDKTEKESAAGIAFAQMMAHDNAKTGRVKAINPAASFQSIHNVCRFLEKNYSSISLHAFTFAAILRLTSLINNAFLVSEQRRYLRALAMLLSVHQGTLQRPLIWEAFLTETITLLLQPDICRTVLSMVMWAFDWLESLSSTPSKLVNIFCQLGEIRIELGGSGTPGSQPNQMGDALEDWIVKMSPKWFKSQISQEAFERAVALWPDSLRSRLSVHASPLSLRDLDDLSQNDAVHNAGQLCKHFLHLADADHGQDVVSVFVDSTFWSLKDKISSVWDKEGINAFQDLLYLCNGEVRAPSLNFYGQDTFSKALNATTGEHKKTEAMNALYHAMCKTMVQLLHDRRPQIRSAAYRCLQRMKPILTGKDLKELPADVSDVVPILVPIPIGSVRQSQAMKLDGVINNATWNKKAEHFATWSLELSRLLCKTASQHDKFFLSFEPLLSTPLLPLHHFLGHFVHAALVCSRSMSSERSKAISEHFETVLQNPFASIEAVRSIVNIVLQLRRYEHPFTSGMLGYNAWLSVNFVDLSKAAVKCGLYVSALLFLELANDQGESLDLAEPRVRQIMYDIYSNVEDPDGFYGIHNKDIRDSLRRRLEHEGLSWQALGWAGAVYNVDGNDSRSAIPVLHHLHDIGLSRLASVVATETRTSGSVPLDDPFFADLSWRTGDWNLPIGRESSATSSGLLYSALSAVHRSKSYESASKIVDKAVRAEMTRLGGLQKEMLTSIQSTVTNLLCLRELNRWLDPQLQQGMQEAIDRGTLRDLQDINDKFEFASAERIIATRLSVFDSVKQRESQDMIGDALTPKMELVTKAESTCHIKLSRLALKSNNLQAAINSLTALQKLQTDVGVIDEAQDVFCEVLWKQGEHTLAIQLLEDLLLREKEKKSKGQRIPALEGRLAHWASEARLKAANEIFGMFSNVTKSIKRSTADVSEHAEIFYQFACFADKQYVSQSSSADVKQLKEYSKLRASQALRLSARQSRARESDQKDSAVREAERDEEKLKKFEMQQKQYLNAALQFYAEAVSMSDNFNDCITRLVTLWLENDENEESNVTFSRAAHKVPSYKFIFLGPQLAARLHRPESPTIFNSTLNGLMFRMSQDHPYHTLYHVIPLLWEHKQPQSTNSSMLGRKSAADDIMRRLASSASNRLAVGAAKSMKRFVAIAMEWTSFFEKDKRLEYKLPSDSPLRKAPRDIPVATSTPSIDVTCQYKDIATFDHFSEWYTRAGGLSRPKVMTCFDSNGQKYTQLFKKDDGFRQDAVMEQIFVLVNDLLNRNRQTRSRKLRYRTYGVLALPEATGVIEFVVGTKPLIKYLPPAHEKYHPKDITSHDFLKAMQEVQSVKNNDEKIIQVWTKLKKRFRPVMRHLFTEKYRDPMAWFSMRLTYARSLAVTSIVGWVLEIGDRHCSNILMDECTGELVHIDFGIAFGAGRILPIPELVPFRLTDDLVDALGVTGVNGTFRQCSQLVLQTLIDSSDVILTILEVFKQDPLHTWMVDDKMKKAQDGNHKMYPERGQEKADRIMRETRENLSKELSVQYRVNQLIQEARDVNNLATIFRGWHSWL</sequence>
<gene>
    <name type="primary">TEL1</name>
    <name type="ordered locus">CNBF2640</name>
</gene>